<name>GLGA_CHLTA</name>
<accession>Q3KKP3</accession>
<dbReference type="EC" id="2.4.1.21" evidence="1"/>
<dbReference type="EMBL" id="CP000051">
    <property type="protein sequence ID" value="AAX51079.1"/>
    <property type="molecule type" value="Genomic_DNA"/>
</dbReference>
<dbReference type="RefSeq" id="WP_011324871.1">
    <property type="nucleotide sequence ID" value="NC_007429.1"/>
</dbReference>
<dbReference type="SMR" id="Q3KKP3"/>
<dbReference type="CAZy" id="GT5">
    <property type="family name" value="Glycosyltransferase Family 5"/>
</dbReference>
<dbReference type="KEGG" id="cta:CTA_0869"/>
<dbReference type="HOGENOM" id="CLU_009583_18_3_0"/>
<dbReference type="UniPathway" id="UPA00164"/>
<dbReference type="Proteomes" id="UP000002532">
    <property type="component" value="Chromosome"/>
</dbReference>
<dbReference type="GO" id="GO:0009011">
    <property type="term" value="F:alpha-1,4-glucan glucosyltransferase (ADP-glucose donor) activity"/>
    <property type="evidence" value="ECO:0007669"/>
    <property type="project" value="UniProtKB-UniRule"/>
</dbReference>
<dbReference type="GO" id="GO:0004373">
    <property type="term" value="F:alpha-1,4-glucan glucosyltransferase (UDP-glucose donor) activity"/>
    <property type="evidence" value="ECO:0007669"/>
    <property type="project" value="InterPro"/>
</dbReference>
<dbReference type="GO" id="GO:0005978">
    <property type="term" value="P:glycogen biosynthetic process"/>
    <property type="evidence" value="ECO:0007669"/>
    <property type="project" value="UniProtKB-UniRule"/>
</dbReference>
<dbReference type="CDD" id="cd03791">
    <property type="entry name" value="GT5_Glycogen_synthase_DULL1-like"/>
    <property type="match status" value="1"/>
</dbReference>
<dbReference type="Gene3D" id="3.40.50.2000">
    <property type="entry name" value="Glycogen Phosphorylase B"/>
    <property type="match status" value="2"/>
</dbReference>
<dbReference type="HAMAP" id="MF_00484">
    <property type="entry name" value="Glycogen_synth"/>
    <property type="match status" value="1"/>
</dbReference>
<dbReference type="InterPro" id="IPR001296">
    <property type="entry name" value="Glyco_trans_1"/>
</dbReference>
<dbReference type="InterPro" id="IPR011835">
    <property type="entry name" value="GS/SS"/>
</dbReference>
<dbReference type="InterPro" id="IPR013534">
    <property type="entry name" value="Starch_synth_cat_dom"/>
</dbReference>
<dbReference type="NCBIfam" id="TIGR02095">
    <property type="entry name" value="glgA"/>
    <property type="match status" value="1"/>
</dbReference>
<dbReference type="NCBIfam" id="NF001904">
    <property type="entry name" value="PRK00654.2-3"/>
    <property type="match status" value="1"/>
</dbReference>
<dbReference type="PANTHER" id="PTHR46083">
    <property type="match status" value="1"/>
</dbReference>
<dbReference type="PANTHER" id="PTHR46083:SF1">
    <property type="entry name" value="GLYCOGEN SYNTHASE 2-RELATED"/>
    <property type="match status" value="1"/>
</dbReference>
<dbReference type="Pfam" id="PF08323">
    <property type="entry name" value="Glyco_transf_5"/>
    <property type="match status" value="1"/>
</dbReference>
<dbReference type="Pfam" id="PF00534">
    <property type="entry name" value="Glycos_transf_1"/>
    <property type="match status" value="1"/>
</dbReference>
<dbReference type="SUPFAM" id="SSF53756">
    <property type="entry name" value="UDP-Glycosyltransferase/glycogen phosphorylase"/>
    <property type="match status" value="1"/>
</dbReference>
<reference key="1">
    <citation type="journal article" date="2005" name="Infect. Immun.">
        <title>Comparative genomic analysis of Chlamydia trachomatis oculotropic and genitotropic strains.</title>
        <authorList>
            <person name="Carlson J.H."/>
            <person name="Porcella S.F."/>
            <person name="McClarty G."/>
            <person name="Caldwell H.D."/>
        </authorList>
    </citation>
    <scope>NUCLEOTIDE SEQUENCE [LARGE SCALE GENOMIC DNA]</scope>
    <source>
        <strain>ATCC VR-571B / DSM 19440 / HAR-13</strain>
    </source>
</reference>
<gene>
    <name evidence="1" type="primary">glgA</name>
    <name type="ordered locus">CTA_0869</name>
</gene>
<feature type="chain" id="PRO_0000230236" description="Glycogen synthase">
    <location>
        <begin position="1"/>
        <end position="474"/>
    </location>
</feature>
<feature type="binding site" evidence="1">
    <location>
        <position position="15"/>
    </location>
    <ligand>
        <name>ADP-alpha-D-glucose</name>
        <dbReference type="ChEBI" id="CHEBI:57498"/>
    </ligand>
</feature>
<keyword id="KW-0320">Glycogen biosynthesis</keyword>
<keyword id="KW-0328">Glycosyltransferase</keyword>
<keyword id="KW-0808">Transferase</keyword>
<proteinExistence type="inferred from homology"/>
<sequence>MKIIHTAIEFAPVIKAGGLGDALYGLAKALAANHTTEVVIPLYPKLFTLPKEQDLCSIQKLSYFFAGEQEATAFSYFYEGIKVTLFKLDTQPELFENAETIYTSDDAFRFCAFSAAAASYIQKEGANIVHLHDWHTGLVAGLLKQQPCSQLQKIVLTLHNFGYRGYTTREILEASSLNEFYISQYQLFRDPQTCVLLKGALYCSDFVTTVSPTYAKEILEDYSDYEIHDAITARQHHLRGILNGIDTTIWGPETDPNLAKNYTKELFETPSIFFEAKAKNKKALYEILGLSLEHSPCVCIISRIAEQKGPHFMKQAILHALENAYTLIIIGTCYGNQLHEEFANLQESLANSPNVRILLTYSDVLARQIFAAADMICIPSMFEPCGLTQMIGMRYGTVPLVRATGGLADTVANGINGFSFFNPHDFYEFRNMLSEAVTTYRTNHDKWQHIVRACLDFSSDLETAANKYLEIYKQ</sequence>
<evidence type="ECO:0000255" key="1">
    <source>
        <dbReference type="HAMAP-Rule" id="MF_00484"/>
    </source>
</evidence>
<protein>
    <recommendedName>
        <fullName evidence="1">Glycogen synthase</fullName>
        <ecNumber evidence="1">2.4.1.21</ecNumber>
    </recommendedName>
    <alternativeName>
        <fullName evidence="1">Starch [bacterial glycogen] synthase</fullName>
    </alternativeName>
</protein>
<comment type="function">
    <text evidence="1">Synthesizes alpha-1,4-glucan chains using ADP-glucose.</text>
</comment>
<comment type="catalytic activity">
    <reaction evidence="1">
        <text>[(1-&gt;4)-alpha-D-glucosyl](n) + ADP-alpha-D-glucose = [(1-&gt;4)-alpha-D-glucosyl](n+1) + ADP + H(+)</text>
        <dbReference type="Rhea" id="RHEA:18189"/>
        <dbReference type="Rhea" id="RHEA-COMP:9584"/>
        <dbReference type="Rhea" id="RHEA-COMP:9587"/>
        <dbReference type="ChEBI" id="CHEBI:15378"/>
        <dbReference type="ChEBI" id="CHEBI:15444"/>
        <dbReference type="ChEBI" id="CHEBI:57498"/>
        <dbReference type="ChEBI" id="CHEBI:456216"/>
        <dbReference type="EC" id="2.4.1.21"/>
    </reaction>
</comment>
<comment type="pathway">
    <text evidence="1">Glycan biosynthesis; glycogen biosynthesis.</text>
</comment>
<comment type="similarity">
    <text evidence="1">Belongs to the glycosyltransferase 1 family. Bacterial/plant glycogen synthase subfamily.</text>
</comment>
<organism>
    <name type="scientific">Chlamydia trachomatis serovar A (strain ATCC VR-571B / DSM 19440 / HAR-13)</name>
    <dbReference type="NCBI Taxonomy" id="315277"/>
    <lineage>
        <taxon>Bacteria</taxon>
        <taxon>Pseudomonadati</taxon>
        <taxon>Chlamydiota</taxon>
        <taxon>Chlamydiia</taxon>
        <taxon>Chlamydiales</taxon>
        <taxon>Chlamydiaceae</taxon>
        <taxon>Chlamydia/Chlamydophila group</taxon>
        <taxon>Chlamydia</taxon>
    </lineage>
</organism>